<evidence type="ECO:0000255" key="1">
    <source>
        <dbReference type="HAMAP-Rule" id="MF_00360"/>
    </source>
</evidence>
<evidence type="ECO:0000305" key="2"/>
<organism>
    <name type="scientific">Acinetobacter baumannii (strain ATCC 17978 / DSM 105126 / CIP 53.77 / LMG 1025 / NCDC KC755 / 5377)</name>
    <dbReference type="NCBI Taxonomy" id="400667"/>
    <lineage>
        <taxon>Bacteria</taxon>
        <taxon>Pseudomonadati</taxon>
        <taxon>Pseudomonadota</taxon>
        <taxon>Gammaproteobacteria</taxon>
        <taxon>Moraxellales</taxon>
        <taxon>Moraxellaceae</taxon>
        <taxon>Acinetobacter</taxon>
        <taxon>Acinetobacter calcoaceticus/baumannii complex</taxon>
    </lineage>
</organism>
<comment type="function">
    <text evidence="1">Binds together with bS18 to 16S ribosomal RNA.</text>
</comment>
<comment type="similarity">
    <text evidence="1">Belongs to the bacterial ribosomal protein bS6 family.</text>
</comment>
<proteinExistence type="inferred from homology"/>
<gene>
    <name evidence="1" type="primary">rpsF</name>
    <name type="ordered locus">A1S_2171</name>
</gene>
<reference key="1">
    <citation type="journal article" date="2007" name="Genes Dev.">
        <title>New insights into Acinetobacter baumannii pathogenesis revealed by high-density pyrosequencing and transposon mutagenesis.</title>
        <authorList>
            <person name="Smith M.G."/>
            <person name="Gianoulis T.A."/>
            <person name="Pukatzki S."/>
            <person name="Mekalanos J.J."/>
            <person name="Ornston L.N."/>
            <person name="Gerstein M."/>
            <person name="Snyder M."/>
        </authorList>
    </citation>
    <scope>NUCLEOTIDE SEQUENCE [LARGE SCALE GENOMIC DNA]</scope>
    <source>
        <strain>ATCC 17978 / DSM 105126 / CIP 53.77 / LMG 1025 / NCDC KC755 / 5377</strain>
    </source>
</reference>
<sequence length="127" mass="14963">MRHYEIVLLVHPDQSDQVVGMVERYISQIKEADGQIHRLEDWGRRQLAYPINKIHKAHYILMNVECGQSTLDELEELFRYNDAIIRNLIIRREHAITEESLLAKSAEEKRARKAQREEAQQVAQEAE</sequence>
<feature type="chain" id="PRO_1000120694" description="Small ribosomal subunit protein bS6">
    <location>
        <begin position="1"/>
        <end position="127"/>
    </location>
</feature>
<name>RS6_ACIBT</name>
<protein>
    <recommendedName>
        <fullName evidence="1">Small ribosomal subunit protein bS6</fullName>
    </recommendedName>
    <alternativeName>
        <fullName evidence="2">30S ribosomal protein S6</fullName>
    </alternativeName>
</protein>
<dbReference type="EMBL" id="CP000521">
    <property type="protein sequence ID" value="ABO12598.2"/>
    <property type="molecule type" value="Genomic_DNA"/>
</dbReference>
<dbReference type="RefSeq" id="WP_001216679.1">
    <property type="nucleotide sequence ID" value="NZ_CP053098.1"/>
</dbReference>
<dbReference type="SMR" id="A3M6Q4"/>
<dbReference type="GeneID" id="92894413"/>
<dbReference type="KEGG" id="acb:A1S_2171"/>
<dbReference type="HOGENOM" id="CLU_113441_6_1_6"/>
<dbReference type="GO" id="GO:0022627">
    <property type="term" value="C:cytosolic small ribosomal subunit"/>
    <property type="evidence" value="ECO:0007669"/>
    <property type="project" value="TreeGrafter"/>
</dbReference>
<dbReference type="GO" id="GO:0070181">
    <property type="term" value="F:small ribosomal subunit rRNA binding"/>
    <property type="evidence" value="ECO:0007669"/>
    <property type="project" value="TreeGrafter"/>
</dbReference>
<dbReference type="GO" id="GO:0003735">
    <property type="term" value="F:structural constituent of ribosome"/>
    <property type="evidence" value="ECO:0007669"/>
    <property type="project" value="InterPro"/>
</dbReference>
<dbReference type="GO" id="GO:0006412">
    <property type="term" value="P:translation"/>
    <property type="evidence" value="ECO:0007669"/>
    <property type="project" value="UniProtKB-UniRule"/>
</dbReference>
<dbReference type="CDD" id="cd00473">
    <property type="entry name" value="bS6"/>
    <property type="match status" value="1"/>
</dbReference>
<dbReference type="FunFam" id="3.30.70.60:FF:000003">
    <property type="entry name" value="30S ribosomal protein S6"/>
    <property type="match status" value="1"/>
</dbReference>
<dbReference type="Gene3D" id="3.30.70.60">
    <property type="match status" value="1"/>
</dbReference>
<dbReference type="HAMAP" id="MF_00360">
    <property type="entry name" value="Ribosomal_bS6"/>
    <property type="match status" value="1"/>
</dbReference>
<dbReference type="InterPro" id="IPR000529">
    <property type="entry name" value="Ribosomal_bS6"/>
</dbReference>
<dbReference type="InterPro" id="IPR020815">
    <property type="entry name" value="Ribosomal_bS6_CS"/>
</dbReference>
<dbReference type="InterPro" id="IPR035980">
    <property type="entry name" value="Ribosomal_bS6_sf"/>
</dbReference>
<dbReference type="InterPro" id="IPR020814">
    <property type="entry name" value="Ribosomal_S6_plastid/chlpt"/>
</dbReference>
<dbReference type="InterPro" id="IPR014717">
    <property type="entry name" value="Transl_elong_EF1B/ribsomal_bS6"/>
</dbReference>
<dbReference type="NCBIfam" id="TIGR00166">
    <property type="entry name" value="S6"/>
    <property type="match status" value="1"/>
</dbReference>
<dbReference type="PANTHER" id="PTHR21011">
    <property type="entry name" value="MITOCHONDRIAL 28S RIBOSOMAL PROTEIN S6"/>
    <property type="match status" value="1"/>
</dbReference>
<dbReference type="PANTHER" id="PTHR21011:SF1">
    <property type="entry name" value="SMALL RIBOSOMAL SUBUNIT PROTEIN BS6M"/>
    <property type="match status" value="1"/>
</dbReference>
<dbReference type="Pfam" id="PF01250">
    <property type="entry name" value="Ribosomal_S6"/>
    <property type="match status" value="1"/>
</dbReference>
<dbReference type="SUPFAM" id="SSF54995">
    <property type="entry name" value="Ribosomal protein S6"/>
    <property type="match status" value="1"/>
</dbReference>
<dbReference type="PROSITE" id="PS01048">
    <property type="entry name" value="RIBOSOMAL_S6"/>
    <property type="match status" value="1"/>
</dbReference>
<accession>A3M6Q4</accession>
<keyword id="KW-0687">Ribonucleoprotein</keyword>
<keyword id="KW-0689">Ribosomal protein</keyword>
<keyword id="KW-0694">RNA-binding</keyword>
<keyword id="KW-0699">rRNA-binding</keyword>